<protein>
    <recommendedName>
        <fullName>Putative antiporter subunit mnhD2</fullName>
    </recommendedName>
    <alternativeName>
        <fullName>Mrp complex subunit D2</fullName>
    </alternativeName>
    <alternativeName>
        <fullName>Putative NADH-ubiquinone oxidoreductase subunit mnhD2</fullName>
    </alternativeName>
</protein>
<accession>Q49VH2</accession>
<comment type="subunit">
    <text evidence="1">May form a heterooligomeric complex that consists of seven subunits: mnhA2, mnhB2, mnhC2, mnhD2, mnhE2, mnhF2 and mnhG2.</text>
</comment>
<comment type="subcellular location">
    <subcellularLocation>
        <location evidence="3">Cell membrane</location>
        <topology evidence="3">Multi-pass membrane protein</topology>
    </subcellularLocation>
</comment>
<comment type="similarity">
    <text evidence="3">Belongs to the CPA3 antiporters (TC 2.A.63) subunit D family.</text>
</comment>
<name>MNHD2_STAS1</name>
<sequence length="501" mass="55059">MLMSNLLILPLLLPAVCALGLVFIRTHSRLSRIFSIGTMAVTTVVSLLLLIYVMYHKPIALDFGGWQAPFGIQFVGDSLSLLLVTTSSFVVTLIMAYGFGRTEKRAIRYYLPSFILFLTVGVIGSFLTADLFNIYVMFEVMLLASFVLITLGQSVEQLRAAIIYVVLNILGSWLLLLGVGLLYKLTGTLNFTLVAQRLNEMDDKSSIVIVSMVFLIAFSAKAALVLFMWLPKAYAVLNTELAALFAALMTKVGAYALIRFFTLIFDEHSGITHPLLVFLSCITMLIGAFGVLAYRDIKKIAAYQVILSIGFIILGLGTNTIAGVNGAIFYLANDIVVKTLLFFIIGSLVYITGLRQYKSLYGLAKQEPFFGVAFVVMILAIGGVPPFSGFPGKVFIFKGAIENGNYIGLALMIITSLIAMFSLFRIFFVMYLGNENKGEAIVFNKIPTYRKNLIGVLVAMIIVMGLAAPLLFKVTDNATHLNMDDGLYEKMVNPHLIKGDK</sequence>
<organism>
    <name type="scientific">Staphylococcus saprophyticus subsp. saprophyticus (strain ATCC 15305 / DSM 20229 / NCIMB 8711 / NCTC 7292 / S-41)</name>
    <dbReference type="NCBI Taxonomy" id="342451"/>
    <lineage>
        <taxon>Bacteria</taxon>
        <taxon>Bacillati</taxon>
        <taxon>Bacillota</taxon>
        <taxon>Bacilli</taxon>
        <taxon>Bacillales</taxon>
        <taxon>Staphylococcaceae</taxon>
        <taxon>Staphylococcus</taxon>
    </lineage>
</organism>
<dbReference type="EMBL" id="AP008934">
    <property type="protein sequence ID" value="BAE19238.1"/>
    <property type="molecule type" value="Genomic_DNA"/>
</dbReference>
<dbReference type="RefSeq" id="WP_011303735.1">
    <property type="nucleotide sequence ID" value="NZ_MTGA01000039.1"/>
</dbReference>
<dbReference type="SMR" id="Q49VH2"/>
<dbReference type="KEGG" id="ssp:SSP2093"/>
<dbReference type="PATRIC" id="fig|342451.11.peg.2086"/>
<dbReference type="eggNOG" id="COG0651">
    <property type="taxonomic scope" value="Bacteria"/>
</dbReference>
<dbReference type="HOGENOM" id="CLU_007100_9_2_9"/>
<dbReference type="Proteomes" id="UP000006371">
    <property type="component" value="Chromosome"/>
</dbReference>
<dbReference type="GO" id="GO:0005886">
    <property type="term" value="C:plasma membrane"/>
    <property type="evidence" value="ECO:0007669"/>
    <property type="project" value="UniProtKB-SubCell"/>
</dbReference>
<dbReference type="GO" id="GO:0015297">
    <property type="term" value="F:antiporter activity"/>
    <property type="evidence" value="ECO:0007669"/>
    <property type="project" value="UniProtKB-KW"/>
</dbReference>
<dbReference type="GO" id="GO:0008137">
    <property type="term" value="F:NADH dehydrogenase (ubiquinone) activity"/>
    <property type="evidence" value="ECO:0007669"/>
    <property type="project" value="InterPro"/>
</dbReference>
<dbReference type="GO" id="GO:0042773">
    <property type="term" value="P:ATP synthesis coupled electron transport"/>
    <property type="evidence" value="ECO:0007669"/>
    <property type="project" value="InterPro"/>
</dbReference>
<dbReference type="InterPro" id="IPR050586">
    <property type="entry name" value="CPA3_Na-H_Antiporter_D"/>
</dbReference>
<dbReference type="InterPro" id="IPR003918">
    <property type="entry name" value="NADH_UbQ_OxRdtase"/>
</dbReference>
<dbReference type="InterPro" id="IPR001750">
    <property type="entry name" value="ND/Mrp_TM"/>
</dbReference>
<dbReference type="NCBIfam" id="NF009306">
    <property type="entry name" value="PRK12663.1"/>
    <property type="match status" value="1"/>
</dbReference>
<dbReference type="PANTHER" id="PTHR42703:SF1">
    <property type="entry name" value="NA(+)_H(+) ANTIPORTER SUBUNIT D1"/>
    <property type="match status" value="1"/>
</dbReference>
<dbReference type="PANTHER" id="PTHR42703">
    <property type="entry name" value="NADH DEHYDROGENASE"/>
    <property type="match status" value="1"/>
</dbReference>
<dbReference type="Pfam" id="PF00361">
    <property type="entry name" value="Proton_antipo_M"/>
    <property type="match status" value="1"/>
</dbReference>
<dbReference type="PRINTS" id="PR01437">
    <property type="entry name" value="NUOXDRDTASE4"/>
</dbReference>
<proteinExistence type="inferred from homology"/>
<evidence type="ECO:0000250" key="1"/>
<evidence type="ECO:0000255" key="2"/>
<evidence type="ECO:0000305" key="3"/>
<feature type="chain" id="PRO_0000372246" description="Putative antiporter subunit mnhD2">
    <location>
        <begin position="1"/>
        <end position="501"/>
    </location>
</feature>
<feature type="transmembrane region" description="Helical" evidence="2">
    <location>
        <begin position="4"/>
        <end position="24"/>
    </location>
</feature>
<feature type="transmembrane region" description="Helical" evidence="2">
    <location>
        <begin position="33"/>
        <end position="53"/>
    </location>
</feature>
<feature type="transmembrane region" description="Helical" evidence="2">
    <location>
        <begin position="79"/>
        <end position="99"/>
    </location>
</feature>
<feature type="transmembrane region" description="Helical" evidence="2">
    <location>
        <begin position="109"/>
        <end position="129"/>
    </location>
</feature>
<feature type="transmembrane region" description="Helical" evidence="2">
    <location>
        <begin position="131"/>
        <end position="151"/>
    </location>
</feature>
<feature type="transmembrane region" description="Helical" evidence="2">
    <location>
        <begin position="162"/>
        <end position="182"/>
    </location>
</feature>
<feature type="transmembrane region" description="Helical" evidence="2">
    <location>
        <begin position="207"/>
        <end position="227"/>
    </location>
</feature>
<feature type="transmembrane region" description="Helical" evidence="2">
    <location>
        <begin position="245"/>
        <end position="265"/>
    </location>
</feature>
<feature type="transmembrane region" description="Helical" evidence="2">
    <location>
        <begin position="274"/>
        <end position="294"/>
    </location>
</feature>
<feature type="transmembrane region" description="Helical" evidence="2">
    <location>
        <begin position="309"/>
        <end position="329"/>
    </location>
</feature>
<feature type="transmembrane region" description="Helical" evidence="2">
    <location>
        <begin position="334"/>
        <end position="354"/>
    </location>
</feature>
<feature type="transmembrane region" description="Helical" evidence="2">
    <location>
        <begin position="369"/>
        <end position="389"/>
    </location>
</feature>
<feature type="transmembrane region" description="Helical" evidence="2">
    <location>
        <begin position="409"/>
        <end position="429"/>
    </location>
</feature>
<feature type="transmembrane region" description="Helical" evidence="2">
    <location>
        <begin position="452"/>
        <end position="472"/>
    </location>
</feature>
<keyword id="KW-0050">Antiport</keyword>
<keyword id="KW-1003">Cell membrane</keyword>
<keyword id="KW-0406">Ion transport</keyword>
<keyword id="KW-0472">Membrane</keyword>
<keyword id="KW-1185">Reference proteome</keyword>
<keyword id="KW-0812">Transmembrane</keyword>
<keyword id="KW-1133">Transmembrane helix</keyword>
<keyword id="KW-0813">Transport</keyword>
<reference key="1">
    <citation type="journal article" date="2005" name="Proc. Natl. Acad. Sci. U.S.A.">
        <title>Whole genome sequence of Staphylococcus saprophyticus reveals the pathogenesis of uncomplicated urinary tract infection.</title>
        <authorList>
            <person name="Kuroda M."/>
            <person name="Yamashita A."/>
            <person name="Hirakawa H."/>
            <person name="Kumano M."/>
            <person name="Morikawa K."/>
            <person name="Higashide M."/>
            <person name="Maruyama A."/>
            <person name="Inose Y."/>
            <person name="Matoba K."/>
            <person name="Toh H."/>
            <person name="Kuhara S."/>
            <person name="Hattori M."/>
            <person name="Ohta T."/>
        </authorList>
    </citation>
    <scope>NUCLEOTIDE SEQUENCE [LARGE SCALE GENOMIC DNA]</scope>
    <source>
        <strain>ATCC 15305 / DSM 20229 / NCIMB 8711 / NCTC 7292 / S-41</strain>
    </source>
</reference>
<gene>
    <name type="primary">mnhD2</name>
    <name type="synonym">mrpD2</name>
    <name type="ordered locus">SSP2093</name>
</gene>